<gene>
    <name evidence="1" type="primary">mraZ</name>
    <name type="ordered locus">SCH_0116</name>
</gene>
<dbReference type="EMBL" id="AE017220">
    <property type="protein sequence ID" value="AAX64022.1"/>
    <property type="molecule type" value="Genomic_DNA"/>
</dbReference>
<dbReference type="RefSeq" id="WP_000488294.1">
    <property type="nucleotide sequence ID" value="NC_006905.1"/>
</dbReference>
<dbReference type="SMR" id="Q57TD9"/>
<dbReference type="KEGG" id="sec:SCH_0116"/>
<dbReference type="HOGENOM" id="CLU_107907_2_0_6"/>
<dbReference type="Proteomes" id="UP000000538">
    <property type="component" value="Chromosome"/>
</dbReference>
<dbReference type="GO" id="GO:0005737">
    <property type="term" value="C:cytoplasm"/>
    <property type="evidence" value="ECO:0007669"/>
    <property type="project" value="UniProtKB-UniRule"/>
</dbReference>
<dbReference type="GO" id="GO:0009295">
    <property type="term" value="C:nucleoid"/>
    <property type="evidence" value="ECO:0007669"/>
    <property type="project" value="UniProtKB-SubCell"/>
</dbReference>
<dbReference type="GO" id="GO:0003700">
    <property type="term" value="F:DNA-binding transcription factor activity"/>
    <property type="evidence" value="ECO:0007669"/>
    <property type="project" value="UniProtKB-UniRule"/>
</dbReference>
<dbReference type="GO" id="GO:0000976">
    <property type="term" value="F:transcription cis-regulatory region binding"/>
    <property type="evidence" value="ECO:0007669"/>
    <property type="project" value="TreeGrafter"/>
</dbReference>
<dbReference type="GO" id="GO:2000143">
    <property type="term" value="P:negative regulation of DNA-templated transcription initiation"/>
    <property type="evidence" value="ECO:0007669"/>
    <property type="project" value="TreeGrafter"/>
</dbReference>
<dbReference type="CDD" id="cd16321">
    <property type="entry name" value="MraZ_C"/>
    <property type="match status" value="1"/>
</dbReference>
<dbReference type="CDD" id="cd16320">
    <property type="entry name" value="MraZ_N"/>
    <property type="match status" value="1"/>
</dbReference>
<dbReference type="FunFam" id="3.40.1550.20:FF:000001">
    <property type="entry name" value="Transcriptional regulator MraZ"/>
    <property type="match status" value="1"/>
</dbReference>
<dbReference type="Gene3D" id="3.40.1550.20">
    <property type="entry name" value="Transcriptional regulator MraZ domain"/>
    <property type="match status" value="1"/>
</dbReference>
<dbReference type="HAMAP" id="MF_01008">
    <property type="entry name" value="MraZ"/>
    <property type="match status" value="1"/>
</dbReference>
<dbReference type="InterPro" id="IPR003444">
    <property type="entry name" value="MraZ"/>
</dbReference>
<dbReference type="InterPro" id="IPR035644">
    <property type="entry name" value="MraZ_C"/>
</dbReference>
<dbReference type="InterPro" id="IPR020603">
    <property type="entry name" value="MraZ_dom"/>
</dbReference>
<dbReference type="InterPro" id="IPR035642">
    <property type="entry name" value="MraZ_N"/>
</dbReference>
<dbReference type="InterPro" id="IPR038619">
    <property type="entry name" value="MraZ_sf"/>
</dbReference>
<dbReference type="InterPro" id="IPR007159">
    <property type="entry name" value="SpoVT-AbrB_dom"/>
</dbReference>
<dbReference type="InterPro" id="IPR037914">
    <property type="entry name" value="SpoVT-AbrB_sf"/>
</dbReference>
<dbReference type="NCBIfam" id="TIGR00242">
    <property type="entry name" value="division/cell wall cluster transcriptional repressor MraZ"/>
    <property type="match status" value="1"/>
</dbReference>
<dbReference type="PANTHER" id="PTHR34701">
    <property type="entry name" value="TRANSCRIPTIONAL REGULATOR MRAZ"/>
    <property type="match status" value="1"/>
</dbReference>
<dbReference type="PANTHER" id="PTHR34701:SF1">
    <property type="entry name" value="TRANSCRIPTIONAL REGULATOR MRAZ"/>
    <property type="match status" value="1"/>
</dbReference>
<dbReference type="Pfam" id="PF02381">
    <property type="entry name" value="MraZ"/>
    <property type="match status" value="2"/>
</dbReference>
<dbReference type="SUPFAM" id="SSF89447">
    <property type="entry name" value="AbrB/MazE/MraZ-like"/>
    <property type="match status" value="1"/>
</dbReference>
<dbReference type="PROSITE" id="PS51740">
    <property type="entry name" value="SPOVT_ABRB"/>
    <property type="match status" value="2"/>
</dbReference>
<keyword id="KW-0963">Cytoplasm</keyword>
<keyword id="KW-0238">DNA-binding</keyword>
<keyword id="KW-0677">Repeat</keyword>
<keyword id="KW-0678">Repressor</keyword>
<keyword id="KW-0804">Transcription</keyword>
<keyword id="KW-0805">Transcription regulation</keyword>
<sequence>MFRGATLVNLDSKGRLTVPTRYREQLIESATGQMVCTIDIHHPCLLLYPLPEWEIIEQKLSRLSSMNPVERRVQRLLLGHASECQMDGAGRLLIAPVLRQHAGLTKEVMLVGQFNKFELWDETTWYQQVKEDIDAEQSATETLSERLQDLSL</sequence>
<proteinExistence type="inferred from homology"/>
<comment type="function">
    <text evidence="1">Negatively regulates its own expression and that of the subsequent genes in the proximal part of the division and cell wall (dcw) gene cluster. Acts by binding directly to DNA. May also regulate the expression of genes outside the dcw cluster.</text>
</comment>
<comment type="subunit">
    <text evidence="1">Forms oligomers.</text>
</comment>
<comment type="subcellular location">
    <subcellularLocation>
        <location evidence="1">Cytoplasm</location>
        <location evidence="1">Nucleoid</location>
    </subcellularLocation>
</comment>
<comment type="similarity">
    <text evidence="1">Belongs to the MraZ family.</text>
</comment>
<protein>
    <recommendedName>
        <fullName>Transcriptional regulator MraZ</fullName>
    </recommendedName>
</protein>
<organism>
    <name type="scientific">Salmonella choleraesuis (strain SC-B67)</name>
    <dbReference type="NCBI Taxonomy" id="321314"/>
    <lineage>
        <taxon>Bacteria</taxon>
        <taxon>Pseudomonadati</taxon>
        <taxon>Pseudomonadota</taxon>
        <taxon>Gammaproteobacteria</taxon>
        <taxon>Enterobacterales</taxon>
        <taxon>Enterobacteriaceae</taxon>
        <taxon>Salmonella</taxon>
    </lineage>
</organism>
<evidence type="ECO:0000255" key="1">
    <source>
        <dbReference type="HAMAP-Rule" id="MF_01008"/>
    </source>
</evidence>
<evidence type="ECO:0000255" key="2">
    <source>
        <dbReference type="PROSITE-ProRule" id="PRU01076"/>
    </source>
</evidence>
<accession>Q57TD9</accession>
<reference key="1">
    <citation type="journal article" date="2005" name="Nucleic Acids Res.">
        <title>The genome sequence of Salmonella enterica serovar Choleraesuis, a highly invasive and resistant zoonotic pathogen.</title>
        <authorList>
            <person name="Chiu C.-H."/>
            <person name="Tang P."/>
            <person name="Chu C."/>
            <person name="Hu S."/>
            <person name="Bao Q."/>
            <person name="Yu J."/>
            <person name="Chou Y.-Y."/>
            <person name="Wang H.-S."/>
            <person name="Lee Y.-S."/>
        </authorList>
    </citation>
    <scope>NUCLEOTIDE SEQUENCE [LARGE SCALE GENOMIC DNA]</scope>
    <source>
        <strain>SC-B67</strain>
    </source>
</reference>
<name>MRAZ_SALCH</name>
<feature type="chain" id="PRO_0000108529" description="Transcriptional regulator MraZ">
    <location>
        <begin position="1"/>
        <end position="152"/>
    </location>
</feature>
<feature type="domain" description="SpoVT-AbrB 1" evidence="2">
    <location>
        <begin position="5"/>
        <end position="52"/>
    </location>
</feature>
<feature type="domain" description="SpoVT-AbrB 2" evidence="2">
    <location>
        <begin position="81"/>
        <end position="124"/>
    </location>
</feature>